<dbReference type="EC" id="6.1.1.11" evidence="1"/>
<dbReference type="EMBL" id="AL766844">
    <property type="protein sequence ID" value="CAD45988.1"/>
    <property type="molecule type" value="Genomic_DNA"/>
</dbReference>
<dbReference type="RefSeq" id="WP_000886193.1">
    <property type="nucleotide sequence ID" value="NC_004368.1"/>
</dbReference>
<dbReference type="SMR" id="P67565"/>
<dbReference type="KEGG" id="san:serS"/>
<dbReference type="eggNOG" id="COG0172">
    <property type="taxonomic scope" value="Bacteria"/>
</dbReference>
<dbReference type="HOGENOM" id="CLU_023797_1_1_9"/>
<dbReference type="UniPathway" id="UPA00906">
    <property type="reaction ID" value="UER00895"/>
</dbReference>
<dbReference type="Proteomes" id="UP000000823">
    <property type="component" value="Chromosome"/>
</dbReference>
<dbReference type="GO" id="GO:0005737">
    <property type="term" value="C:cytoplasm"/>
    <property type="evidence" value="ECO:0007669"/>
    <property type="project" value="UniProtKB-SubCell"/>
</dbReference>
<dbReference type="GO" id="GO:0005524">
    <property type="term" value="F:ATP binding"/>
    <property type="evidence" value="ECO:0007669"/>
    <property type="project" value="UniProtKB-UniRule"/>
</dbReference>
<dbReference type="GO" id="GO:0140096">
    <property type="term" value="F:catalytic activity, acting on a protein"/>
    <property type="evidence" value="ECO:0007669"/>
    <property type="project" value="UniProtKB-ARBA"/>
</dbReference>
<dbReference type="GO" id="GO:0004828">
    <property type="term" value="F:serine-tRNA ligase activity"/>
    <property type="evidence" value="ECO:0007669"/>
    <property type="project" value="UniProtKB-UniRule"/>
</dbReference>
<dbReference type="GO" id="GO:0016740">
    <property type="term" value="F:transferase activity"/>
    <property type="evidence" value="ECO:0007669"/>
    <property type="project" value="UniProtKB-ARBA"/>
</dbReference>
<dbReference type="GO" id="GO:0016260">
    <property type="term" value="P:selenocysteine biosynthetic process"/>
    <property type="evidence" value="ECO:0007669"/>
    <property type="project" value="UniProtKB-UniRule"/>
</dbReference>
<dbReference type="GO" id="GO:0006434">
    <property type="term" value="P:seryl-tRNA aminoacylation"/>
    <property type="evidence" value="ECO:0007669"/>
    <property type="project" value="UniProtKB-UniRule"/>
</dbReference>
<dbReference type="CDD" id="cd00770">
    <property type="entry name" value="SerRS_core"/>
    <property type="match status" value="1"/>
</dbReference>
<dbReference type="Gene3D" id="3.30.930.10">
    <property type="entry name" value="Bira Bifunctional Protein, Domain 2"/>
    <property type="match status" value="1"/>
</dbReference>
<dbReference type="Gene3D" id="1.10.287.40">
    <property type="entry name" value="Serine-tRNA synthetase, tRNA binding domain"/>
    <property type="match status" value="1"/>
</dbReference>
<dbReference type="HAMAP" id="MF_00176">
    <property type="entry name" value="Ser_tRNA_synth_type1"/>
    <property type="match status" value="1"/>
</dbReference>
<dbReference type="InterPro" id="IPR002314">
    <property type="entry name" value="aa-tRNA-synt_IIb"/>
</dbReference>
<dbReference type="InterPro" id="IPR006195">
    <property type="entry name" value="aa-tRNA-synth_II"/>
</dbReference>
<dbReference type="InterPro" id="IPR045864">
    <property type="entry name" value="aa-tRNA-synth_II/BPL/LPL"/>
</dbReference>
<dbReference type="InterPro" id="IPR002317">
    <property type="entry name" value="Ser-tRNA-ligase_type_1"/>
</dbReference>
<dbReference type="InterPro" id="IPR015866">
    <property type="entry name" value="Ser-tRNA-synth_1_N"/>
</dbReference>
<dbReference type="InterPro" id="IPR042103">
    <property type="entry name" value="SerRS_1_N_sf"/>
</dbReference>
<dbReference type="InterPro" id="IPR033729">
    <property type="entry name" value="SerRS_core"/>
</dbReference>
<dbReference type="InterPro" id="IPR010978">
    <property type="entry name" value="tRNA-bd_arm"/>
</dbReference>
<dbReference type="NCBIfam" id="TIGR00414">
    <property type="entry name" value="serS"/>
    <property type="match status" value="1"/>
</dbReference>
<dbReference type="PANTHER" id="PTHR43697:SF1">
    <property type="entry name" value="SERINE--TRNA LIGASE"/>
    <property type="match status" value="1"/>
</dbReference>
<dbReference type="PANTHER" id="PTHR43697">
    <property type="entry name" value="SERYL-TRNA SYNTHETASE"/>
    <property type="match status" value="1"/>
</dbReference>
<dbReference type="Pfam" id="PF02403">
    <property type="entry name" value="Seryl_tRNA_N"/>
    <property type="match status" value="1"/>
</dbReference>
<dbReference type="Pfam" id="PF00587">
    <property type="entry name" value="tRNA-synt_2b"/>
    <property type="match status" value="1"/>
</dbReference>
<dbReference type="PIRSF" id="PIRSF001529">
    <property type="entry name" value="Ser-tRNA-synth_IIa"/>
    <property type="match status" value="1"/>
</dbReference>
<dbReference type="PRINTS" id="PR00981">
    <property type="entry name" value="TRNASYNTHSER"/>
</dbReference>
<dbReference type="SUPFAM" id="SSF55681">
    <property type="entry name" value="Class II aaRS and biotin synthetases"/>
    <property type="match status" value="1"/>
</dbReference>
<dbReference type="SUPFAM" id="SSF46589">
    <property type="entry name" value="tRNA-binding arm"/>
    <property type="match status" value="1"/>
</dbReference>
<dbReference type="PROSITE" id="PS50862">
    <property type="entry name" value="AA_TRNA_LIGASE_II"/>
    <property type="match status" value="1"/>
</dbReference>
<name>SYS_STRA3</name>
<protein>
    <recommendedName>
        <fullName evidence="1">Serine--tRNA ligase</fullName>
        <ecNumber evidence="1">6.1.1.11</ecNumber>
    </recommendedName>
    <alternativeName>
        <fullName evidence="1">Seryl-tRNA synthetase</fullName>
        <shortName evidence="1">SerRS</shortName>
    </alternativeName>
    <alternativeName>
        <fullName evidence="1">Seryl-tRNA(Ser/Sec) synthetase</fullName>
    </alternativeName>
</protein>
<keyword id="KW-0030">Aminoacyl-tRNA synthetase</keyword>
<keyword id="KW-0067">ATP-binding</keyword>
<keyword id="KW-0963">Cytoplasm</keyword>
<keyword id="KW-0436">Ligase</keyword>
<keyword id="KW-0547">Nucleotide-binding</keyword>
<keyword id="KW-0648">Protein biosynthesis</keyword>
<reference key="1">
    <citation type="journal article" date="2002" name="Mol. Microbiol.">
        <title>Genome sequence of Streptococcus agalactiae, a pathogen causing invasive neonatal disease.</title>
        <authorList>
            <person name="Glaser P."/>
            <person name="Rusniok C."/>
            <person name="Buchrieser C."/>
            <person name="Chevalier F."/>
            <person name="Frangeul L."/>
            <person name="Msadek T."/>
            <person name="Zouine M."/>
            <person name="Couve E."/>
            <person name="Lalioui L."/>
            <person name="Poyart C."/>
            <person name="Trieu-Cuot P."/>
            <person name="Kunst F."/>
        </authorList>
    </citation>
    <scope>NUCLEOTIDE SEQUENCE [LARGE SCALE GENOMIC DNA]</scope>
    <source>
        <strain>NEM316</strain>
    </source>
</reference>
<accession>P67565</accession>
<accession>Q8E1J8</accession>
<accession>Q8E715</accession>
<feature type="chain" id="PRO_0000122127" description="Serine--tRNA ligase">
    <location>
        <begin position="1"/>
        <end position="425"/>
    </location>
</feature>
<feature type="binding site" evidence="1">
    <location>
        <begin position="230"/>
        <end position="232"/>
    </location>
    <ligand>
        <name>L-serine</name>
        <dbReference type="ChEBI" id="CHEBI:33384"/>
    </ligand>
</feature>
<feature type="binding site" evidence="1">
    <location>
        <begin position="261"/>
        <end position="263"/>
    </location>
    <ligand>
        <name>ATP</name>
        <dbReference type="ChEBI" id="CHEBI:30616"/>
    </ligand>
</feature>
<feature type="binding site" evidence="1">
    <location>
        <position position="284"/>
    </location>
    <ligand>
        <name>L-serine</name>
        <dbReference type="ChEBI" id="CHEBI:33384"/>
    </ligand>
</feature>
<feature type="binding site" evidence="1">
    <location>
        <begin position="348"/>
        <end position="351"/>
    </location>
    <ligand>
        <name>ATP</name>
        <dbReference type="ChEBI" id="CHEBI:30616"/>
    </ligand>
</feature>
<feature type="binding site" evidence="1">
    <location>
        <position position="384"/>
    </location>
    <ligand>
        <name>L-serine</name>
        <dbReference type="ChEBI" id="CHEBI:33384"/>
    </ligand>
</feature>
<organism>
    <name type="scientific">Streptococcus agalactiae serotype III (strain NEM316)</name>
    <dbReference type="NCBI Taxonomy" id="211110"/>
    <lineage>
        <taxon>Bacteria</taxon>
        <taxon>Bacillati</taxon>
        <taxon>Bacillota</taxon>
        <taxon>Bacilli</taxon>
        <taxon>Lactobacillales</taxon>
        <taxon>Streptococcaceae</taxon>
        <taxon>Streptococcus</taxon>
    </lineage>
</organism>
<proteinExistence type="inferred from homology"/>
<evidence type="ECO:0000255" key="1">
    <source>
        <dbReference type="HAMAP-Rule" id="MF_00176"/>
    </source>
</evidence>
<comment type="function">
    <text evidence="1">Catalyzes the attachment of serine to tRNA(Ser). Is also able to aminoacylate tRNA(Sec) with serine, to form the misacylated tRNA L-seryl-tRNA(Sec), which will be further converted into selenocysteinyl-tRNA(Sec).</text>
</comment>
<comment type="catalytic activity">
    <reaction evidence="1">
        <text>tRNA(Ser) + L-serine + ATP = L-seryl-tRNA(Ser) + AMP + diphosphate + H(+)</text>
        <dbReference type="Rhea" id="RHEA:12292"/>
        <dbReference type="Rhea" id="RHEA-COMP:9669"/>
        <dbReference type="Rhea" id="RHEA-COMP:9703"/>
        <dbReference type="ChEBI" id="CHEBI:15378"/>
        <dbReference type="ChEBI" id="CHEBI:30616"/>
        <dbReference type="ChEBI" id="CHEBI:33019"/>
        <dbReference type="ChEBI" id="CHEBI:33384"/>
        <dbReference type="ChEBI" id="CHEBI:78442"/>
        <dbReference type="ChEBI" id="CHEBI:78533"/>
        <dbReference type="ChEBI" id="CHEBI:456215"/>
        <dbReference type="EC" id="6.1.1.11"/>
    </reaction>
</comment>
<comment type="catalytic activity">
    <reaction evidence="1">
        <text>tRNA(Sec) + L-serine + ATP = L-seryl-tRNA(Sec) + AMP + diphosphate + H(+)</text>
        <dbReference type="Rhea" id="RHEA:42580"/>
        <dbReference type="Rhea" id="RHEA-COMP:9742"/>
        <dbReference type="Rhea" id="RHEA-COMP:10128"/>
        <dbReference type="ChEBI" id="CHEBI:15378"/>
        <dbReference type="ChEBI" id="CHEBI:30616"/>
        <dbReference type="ChEBI" id="CHEBI:33019"/>
        <dbReference type="ChEBI" id="CHEBI:33384"/>
        <dbReference type="ChEBI" id="CHEBI:78442"/>
        <dbReference type="ChEBI" id="CHEBI:78533"/>
        <dbReference type="ChEBI" id="CHEBI:456215"/>
        <dbReference type="EC" id="6.1.1.11"/>
    </reaction>
</comment>
<comment type="pathway">
    <text evidence="1">Aminoacyl-tRNA biosynthesis; selenocysteinyl-tRNA(Sec) biosynthesis; L-seryl-tRNA(Sec) from L-serine and tRNA(Sec): step 1/1.</text>
</comment>
<comment type="subunit">
    <text evidence="1">Homodimer. The tRNA molecule binds across the dimer.</text>
</comment>
<comment type="subcellular location">
    <subcellularLocation>
        <location evidence="1">Cytoplasm</location>
    </subcellularLocation>
</comment>
<comment type="domain">
    <text evidence="1">Consists of two distinct domains, a catalytic core and a N-terminal extension that is involved in tRNA binding.</text>
</comment>
<comment type="similarity">
    <text evidence="1">Belongs to the class-II aminoacyl-tRNA synthetase family. Type-1 seryl-tRNA synthetase subfamily.</text>
</comment>
<sequence>MLDLKRIRTDFDVVAKKLATRGVDQETLTTLKELDIKRRELLIKAEEAKAQRNVASAAIAQAKRNKENADEQIAAMQTLSADIKAIDAELADVDANLQSMVTVLPNTPADDVPLGADEDENVEVRRWGTPREFDFETKAHWDLGESLGILDWERGAKVTGSRFLFYKGLGARLERAIYSFMLDEHAKEGYTEVIPPYMVNHDSMFGTGQYPKFKEDTFELADSPFVLIPTAEVPLTNYYRDEIIDGKELPIYFTAMSPSFRSEAGSAGRDTRGLIRLHQFHKVEMVKFAKPEESYQELEKMTANAENILQKLNLPYRVITLCTGDMGFSAAKTYDLEVWIPAQNTYREISSCSNTEDFQARRAQIRYRDEVDGKVRLLHTLNGSGLAVGRTVAAILENYQNEDGSVTIPEVLRPYMGNIDIIKPN</sequence>
<gene>
    <name evidence="1" type="primary">serS</name>
    <name type="ordered locus">gbs0343</name>
</gene>